<protein>
    <recommendedName>
        <fullName evidence="1">Protoheme IX farnesyltransferase</fullName>
        <ecNumber evidence="1">2.5.1.141</ecNumber>
    </recommendedName>
    <alternativeName>
        <fullName evidence="1">Heme B farnesyltransferase</fullName>
    </alternativeName>
    <alternativeName>
        <fullName evidence="1">Heme O synthase</fullName>
    </alternativeName>
</protein>
<organism>
    <name type="scientific">Legionella pneumophila subsp. pneumophila (strain Philadelphia 1 / ATCC 33152 / DSM 7513)</name>
    <dbReference type="NCBI Taxonomy" id="272624"/>
    <lineage>
        <taxon>Bacteria</taxon>
        <taxon>Pseudomonadati</taxon>
        <taxon>Pseudomonadota</taxon>
        <taxon>Gammaproteobacteria</taxon>
        <taxon>Legionellales</taxon>
        <taxon>Legionellaceae</taxon>
        <taxon>Legionella</taxon>
    </lineage>
</organism>
<reference key="1">
    <citation type="journal article" date="2004" name="Science">
        <title>The genomic sequence of the accidental pathogen Legionella pneumophila.</title>
        <authorList>
            <person name="Chien M."/>
            <person name="Morozova I."/>
            <person name="Shi S."/>
            <person name="Sheng H."/>
            <person name="Chen J."/>
            <person name="Gomez S.M."/>
            <person name="Asamani G."/>
            <person name="Hill K."/>
            <person name="Nuara J."/>
            <person name="Feder M."/>
            <person name="Rineer J."/>
            <person name="Greenberg J.J."/>
            <person name="Steshenko V."/>
            <person name="Park S.H."/>
            <person name="Zhao B."/>
            <person name="Teplitskaya E."/>
            <person name="Edwards J.R."/>
            <person name="Pampou S."/>
            <person name="Georghiou A."/>
            <person name="Chou I.-C."/>
            <person name="Iannuccilli W."/>
            <person name="Ulz M.E."/>
            <person name="Kim D.H."/>
            <person name="Geringer-Sameth A."/>
            <person name="Goldsberry C."/>
            <person name="Morozov P."/>
            <person name="Fischer S.G."/>
            <person name="Segal G."/>
            <person name="Qu X."/>
            <person name="Rzhetsky A."/>
            <person name="Zhang P."/>
            <person name="Cayanis E."/>
            <person name="De Jong P.J."/>
            <person name="Ju J."/>
            <person name="Kalachikov S."/>
            <person name="Shuman H.A."/>
            <person name="Russo J.J."/>
        </authorList>
    </citation>
    <scope>NUCLEOTIDE SEQUENCE [LARGE SCALE GENOMIC DNA]</scope>
    <source>
        <strain>Philadelphia 1 / ATCC 33152 / DSM 7513</strain>
    </source>
</reference>
<sequence>MRTEYAARLPVDWRDYVELCKPRVVLLMLLTVIVGMYLAAPGWVSLRLIAFTLLGIGLCAGSAAAINHLVDRHIDSIMARTKKRPVAYGRVSVKQALWFAVIIGLMGLSLLILFVNQLTALLTFVTLIGYAGVYTGYLKRATSQNIVIGGLAGAAPPLLGWTAVTDQLDPQALLLVLIIFTWTPPHFWALAIYRYKEYQDAEIPMLPVTHGIQFTKLNIYLYTVLLLVVSLLPFVVSMSGWIYLLGALVLGIRFLVWAHKLYFTDKPVVAMQTFRFSILYLMLLFVFLLVDHYF</sequence>
<name>CYOE_LEGPH</name>
<dbReference type="EC" id="2.5.1.141" evidence="1"/>
<dbReference type="EMBL" id="AE017354">
    <property type="protein sequence ID" value="AAU26509.1"/>
    <property type="molecule type" value="Genomic_DNA"/>
</dbReference>
<dbReference type="RefSeq" id="WP_010946161.1">
    <property type="nucleotide sequence ID" value="NC_002942.5"/>
</dbReference>
<dbReference type="RefSeq" id="YP_094456.1">
    <property type="nucleotide sequence ID" value="NC_002942.5"/>
</dbReference>
<dbReference type="SMR" id="Q5ZYG0"/>
<dbReference type="STRING" id="272624.lpg0412"/>
<dbReference type="PaxDb" id="272624-lpg0412"/>
<dbReference type="GeneID" id="57034416"/>
<dbReference type="KEGG" id="lpn:lpg0412"/>
<dbReference type="PATRIC" id="fig|272624.6.peg.428"/>
<dbReference type="eggNOG" id="COG0109">
    <property type="taxonomic scope" value="Bacteria"/>
</dbReference>
<dbReference type="HOGENOM" id="CLU_029631_0_2_6"/>
<dbReference type="OrthoDB" id="9814417at2"/>
<dbReference type="UniPathway" id="UPA00834">
    <property type="reaction ID" value="UER00712"/>
</dbReference>
<dbReference type="Proteomes" id="UP000000609">
    <property type="component" value="Chromosome"/>
</dbReference>
<dbReference type="GO" id="GO:0005886">
    <property type="term" value="C:plasma membrane"/>
    <property type="evidence" value="ECO:0007669"/>
    <property type="project" value="UniProtKB-SubCell"/>
</dbReference>
<dbReference type="GO" id="GO:0008495">
    <property type="term" value="F:protoheme IX farnesyltransferase activity"/>
    <property type="evidence" value="ECO:0007669"/>
    <property type="project" value="UniProtKB-UniRule"/>
</dbReference>
<dbReference type="GO" id="GO:0048034">
    <property type="term" value="P:heme O biosynthetic process"/>
    <property type="evidence" value="ECO:0007669"/>
    <property type="project" value="UniProtKB-UniRule"/>
</dbReference>
<dbReference type="CDD" id="cd13957">
    <property type="entry name" value="PT_UbiA_Cox10"/>
    <property type="match status" value="1"/>
</dbReference>
<dbReference type="FunFam" id="1.10.357.140:FF:000001">
    <property type="entry name" value="Protoheme IX farnesyltransferase"/>
    <property type="match status" value="1"/>
</dbReference>
<dbReference type="Gene3D" id="1.10.357.140">
    <property type="entry name" value="UbiA prenyltransferase"/>
    <property type="match status" value="1"/>
</dbReference>
<dbReference type="HAMAP" id="MF_00154">
    <property type="entry name" value="CyoE_CtaB"/>
    <property type="match status" value="1"/>
</dbReference>
<dbReference type="InterPro" id="IPR006369">
    <property type="entry name" value="Protohaem_IX_farnesylTrfase"/>
</dbReference>
<dbReference type="InterPro" id="IPR000537">
    <property type="entry name" value="UbiA_prenyltransferase"/>
</dbReference>
<dbReference type="InterPro" id="IPR030470">
    <property type="entry name" value="UbiA_prenylTrfase_CS"/>
</dbReference>
<dbReference type="InterPro" id="IPR044878">
    <property type="entry name" value="UbiA_sf"/>
</dbReference>
<dbReference type="NCBIfam" id="TIGR01473">
    <property type="entry name" value="cyoE_ctaB"/>
    <property type="match status" value="1"/>
</dbReference>
<dbReference type="NCBIfam" id="NF003349">
    <property type="entry name" value="PRK04375.1-2"/>
    <property type="match status" value="1"/>
</dbReference>
<dbReference type="PANTHER" id="PTHR43448:SF7">
    <property type="entry name" value="4-HYDROXYBENZOATE SOLANESYLTRANSFERASE"/>
    <property type="match status" value="1"/>
</dbReference>
<dbReference type="PANTHER" id="PTHR43448">
    <property type="entry name" value="PROTOHEME IX FARNESYLTRANSFERASE, MITOCHONDRIAL"/>
    <property type="match status" value="1"/>
</dbReference>
<dbReference type="Pfam" id="PF01040">
    <property type="entry name" value="UbiA"/>
    <property type="match status" value="1"/>
</dbReference>
<dbReference type="PROSITE" id="PS00943">
    <property type="entry name" value="UBIA"/>
    <property type="match status" value="1"/>
</dbReference>
<gene>
    <name evidence="1" type="primary">cyoE</name>
    <name type="ordered locus">lpg0412</name>
</gene>
<evidence type="ECO:0000255" key="1">
    <source>
        <dbReference type="HAMAP-Rule" id="MF_00154"/>
    </source>
</evidence>
<comment type="function">
    <text evidence="1">Converts heme B (protoheme IX) to heme O by substitution of the vinyl group on carbon 2 of heme B porphyrin ring with a hydroxyethyl farnesyl side group.</text>
</comment>
<comment type="catalytic activity">
    <reaction evidence="1">
        <text>heme b + (2E,6E)-farnesyl diphosphate + H2O = Fe(II)-heme o + diphosphate</text>
        <dbReference type="Rhea" id="RHEA:28070"/>
        <dbReference type="ChEBI" id="CHEBI:15377"/>
        <dbReference type="ChEBI" id="CHEBI:33019"/>
        <dbReference type="ChEBI" id="CHEBI:60344"/>
        <dbReference type="ChEBI" id="CHEBI:60530"/>
        <dbReference type="ChEBI" id="CHEBI:175763"/>
        <dbReference type="EC" id="2.5.1.141"/>
    </reaction>
</comment>
<comment type="pathway">
    <text evidence="1">Porphyrin-containing compound metabolism; heme O biosynthesis; heme O from protoheme: step 1/1.</text>
</comment>
<comment type="subcellular location">
    <subcellularLocation>
        <location evidence="1">Cell inner membrane</location>
        <topology evidence="1">Multi-pass membrane protein</topology>
    </subcellularLocation>
</comment>
<comment type="miscellaneous">
    <text evidence="1">Carbon 2 of the heme B porphyrin ring is defined according to the Fischer nomenclature.</text>
</comment>
<comment type="similarity">
    <text evidence="1">Belongs to the UbiA prenyltransferase family. Protoheme IX farnesyltransferase subfamily.</text>
</comment>
<keyword id="KW-0997">Cell inner membrane</keyword>
<keyword id="KW-1003">Cell membrane</keyword>
<keyword id="KW-0350">Heme biosynthesis</keyword>
<keyword id="KW-0472">Membrane</keyword>
<keyword id="KW-1185">Reference proteome</keyword>
<keyword id="KW-0808">Transferase</keyword>
<keyword id="KW-0812">Transmembrane</keyword>
<keyword id="KW-1133">Transmembrane helix</keyword>
<accession>Q5ZYG0</accession>
<proteinExistence type="inferred from homology"/>
<feature type="chain" id="PRO_0000326908" description="Protoheme IX farnesyltransferase">
    <location>
        <begin position="1"/>
        <end position="294"/>
    </location>
</feature>
<feature type="transmembrane region" description="Helical" evidence="1">
    <location>
        <begin position="24"/>
        <end position="44"/>
    </location>
</feature>
<feature type="transmembrane region" description="Helical" evidence="1">
    <location>
        <begin position="48"/>
        <end position="68"/>
    </location>
</feature>
<feature type="transmembrane region" description="Helical" evidence="1">
    <location>
        <begin position="96"/>
        <end position="116"/>
    </location>
</feature>
<feature type="transmembrane region" description="Helical" evidence="1">
    <location>
        <begin position="118"/>
        <end position="138"/>
    </location>
</feature>
<feature type="transmembrane region" description="Helical" evidence="1">
    <location>
        <begin position="145"/>
        <end position="165"/>
    </location>
</feature>
<feature type="transmembrane region" description="Helical" evidence="1">
    <location>
        <begin position="172"/>
        <end position="192"/>
    </location>
</feature>
<feature type="transmembrane region" description="Helical" evidence="1">
    <location>
        <begin position="224"/>
        <end position="244"/>
    </location>
</feature>
<feature type="transmembrane region" description="Helical" evidence="1">
    <location>
        <begin position="245"/>
        <end position="265"/>
    </location>
</feature>
<feature type="transmembrane region" description="Helical" evidence="1">
    <location>
        <begin position="268"/>
        <end position="288"/>
    </location>
</feature>